<proteinExistence type="evidence at protein level"/>
<keyword id="KW-0002">3D-structure</keyword>
<keyword id="KW-0007">Acetylation</keyword>
<keyword id="KW-0966">Cell projection</keyword>
<keyword id="KW-0157">Chromophore</keyword>
<keyword id="KW-0903">Direct protein sequencing</keyword>
<keyword id="KW-1015">Disulfide bond</keyword>
<keyword id="KW-0297">G-protein coupled receptor</keyword>
<keyword id="KW-0325">Glycoprotein</keyword>
<keyword id="KW-0449">Lipoprotein</keyword>
<keyword id="KW-0472">Membrane</keyword>
<keyword id="KW-0479">Metal-binding</keyword>
<keyword id="KW-0564">Palmitate</keyword>
<keyword id="KW-0597">Phosphoprotein</keyword>
<keyword id="KW-0600">Photoreceptor protein</keyword>
<keyword id="KW-0675">Receptor</keyword>
<keyword id="KW-1185">Reference proteome</keyword>
<keyword id="KW-0681">Retinal protein</keyword>
<keyword id="KW-0716">Sensory transduction</keyword>
<keyword id="KW-0807">Transducer</keyword>
<keyword id="KW-0812">Transmembrane</keyword>
<keyword id="KW-1133">Transmembrane helix</keyword>
<keyword id="KW-0844">Vision</keyword>
<keyword id="KW-0862">Zinc</keyword>
<gene>
    <name type="primary">RHO</name>
</gene>
<organism>
    <name type="scientific">Bos taurus</name>
    <name type="common">Bovine</name>
    <dbReference type="NCBI Taxonomy" id="9913"/>
    <lineage>
        <taxon>Eukaryota</taxon>
        <taxon>Metazoa</taxon>
        <taxon>Chordata</taxon>
        <taxon>Craniata</taxon>
        <taxon>Vertebrata</taxon>
        <taxon>Euteleostomi</taxon>
        <taxon>Mammalia</taxon>
        <taxon>Eutheria</taxon>
        <taxon>Laurasiatheria</taxon>
        <taxon>Artiodactyla</taxon>
        <taxon>Ruminantia</taxon>
        <taxon>Pecora</taxon>
        <taxon>Bovidae</taxon>
        <taxon>Bovinae</taxon>
        <taxon>Bos</taxon>
    </lineage>
</organism>
<dbReference type="EMBL" id="K00506">
    <property type="protein sequence ID" value="AAA30674.1"/>
    <property type="molecule type" value="Genomic_DNA"/>
</dbReference>
<dbReference type="EMBL" id="K00502">
    <property type="protein sequence ID" value="AAA30674.1"/>
    <property type="status" value="JOINED"/>
    <property type="molecule type" value="Genomic_DNA"/>
</dbReference>
<dbReference type="EMBL" id="K00503">
    <property type="protein sequence ID" value="AAA30674.1"/>
    <property type="status" value="JOINED"/>
    <property type="molecule type" value="Genomic_DNA"/>
</dbReference>
<dbReference type="EMBL" id="K00504">
    <property type="protein sequence ID" value="AAA30674.1"/>
    <property type="status" value="JOINED"/>
    <property type="molecule type" value="Genomic_DNA"/>
</dbReference>
<dbReference type="EMBL" id="K00505">
    <property type="protein sequence ID" value="AAA30674.1"/>
    <property type="status" value="JOINED"/>
    <property type="molecule type" value="Genomic_DNA"/>
</dbReference>
<dbReference type="EMBL" id="M21606">
    <property type="protein sequence ID" value="AAA30675.1"/>
    <property type="molecule type" value="mRNA"/>
</dbReference>
<dbReference type="PIR" id="A90840">
    <property type="entry name" value="OOBO"/>
</dbReference>
<dbReference type="RefSeq" id="NP_001014890.1">
    <property type="nucleotide sequence ID" value="NM_001014890.2"/>
</dbReference>
<dbReference type="PDB" id="1EDS">
    <property type="method" value="NMR"/>
    <property type="chains" value="A=93-123"/>
</dbReference>
<dbReference type="PDB" id="1EDV">
    <property type="method" value="NMR"/>
    <property type="chains" value="A=172-205"/>
</dbReference>
<dbReference type="PDB" id="1EDW">
    <property type="method" value="NMR"/>
    <property type="chains" value="A=268-293"/>
</dbReference>
<dbReference type="PDB" id="1EDX">
    <property type="method" value="NMR"/>
    <property type="chains" value="A=1-40"/>
</dbReference>
<dbReference type="PDB" id="1F88">
    <property type="method" value="X-ray"/>
    <property type="resolution" value="2.80 A"/>
    <property type="chains" value="A/B=1-348"/>
</dbReference>
<dbReference type="PDB" id="1FDF">
    <property type="method" value="NMR"/>
    <property type="chains" value="A=291-315"/>
</dbReference>
<dbReference type="PDB" id="1GZM">
    <property type="method" value="X-ray"/>
    <property type="resolution" value="2.65 A"/>
    <property type="chains" value="A/B=1-348"/>
</dbReference>
<dbReference type="PDB" id="1HZX">
    <property type="method" value="X-ray"/>
    <property type="resolution" value="2.80 A"/>
    <property type="chains" value="A/B=1-348"/>
</dbReference>
<dbReference type="PDB" id="1JFP">
    <property type="method" value="NMR"/>
    <property type="chains" value="A=1-348"/>
</dbReference>
<dbReference type="PDB" id="1L9H">
    <property type="method" value="X-ray"/>
    <property type="resolution" value="2.60 A"/>
    <property type="chains" value="A/B=1-348"/>
</dbReference>
<dbReference type="PDB" id="1LN6">
    <property type="method" value="NMR"/>
    <property type="chains" value="A=1-348"/>
</dbReference>
<dbReference type="PDB" id="1NZS">
    <property type="method" value="NMR"/>
    <property type="chains" value="A=330-348"/>
</dbReference>
<dbReference type="PDB" id="1U19">
    <property type="method" value="X-ray"/>
    <property type="resolution" value="2.20 A"/>
    <property type="chains" value="A/B=1-348"/>
</dbReference>
<dbReference type="PDB" id="1VQX">
    <property type="method" value="NMR"/>
    <property type="chains" value="A=330-348"/>
</dbReference>
<dbReference type="PDB" id="2G87">
    <property type="method" value="X-ray"/>
    <property type="resolution" value="2.60 A"/>
    <property type="chains" value="A/B=1-348"/>
</dbReference>
<dbReference type="PDB" id="2HPY">
    <property type="method" value="X-ray"/>
    <property type="resolution" value="2.80 A"/>
    <property type="chains" value="A/B=1-348"/>
</dbReference>
<dbReference type="PDB" id="2I35">
    <property type="method" value="X-ray"/>
    <property type="resolution" value="3.80 A"/>
    <property type="chains" value="A=1-348"/>
</dbReference>
<dbReference type="PDB" id="2I36">
    <property type="method" value="X-ray"/>
    <property type="resolution" value="4.10 A"/>
    <property type="chains" value="A/B/C=1-348"/>
</dbReference>
<dbReference type="PDB" id="2I37">
    <property type="method" value="X-ray"/>
    <property type="resolution" value="4.15 A"/>
    <property type="chains" value="A/B/C=1-348"/>
</dbReference>
<dbReference type="PDB" id="2J4Y">
    <property type="method" value="X-ray"/>
    <property type="resolution" value="3.40 A"/>
    <property type="chains" value="A/B=1-348"/>
</dbReference>
<dbReference type="PDB" id="2PED">
    <property type="method" value="X-ray"/>
    <property type="resolution" value="2.95 A"/>
    <property type="chains" value="A/B=1-348"/>
</dbReference>
<dbReference type="PDB" id="2X72">
    <property type="method" value="X-ray"/>
    <property type="resolution" value="3.00 A"/>
    <property type="chains" value="A=1-348"/>
</dbReference>
<dbReference type="PDB" id="3C9L">
    <property type="method" value="X-ray"/>
    <property type="resolution" value="2.65 A"/>
    <property type="chains" value="A=1-348"/>
</dbReference>
<dbReference type="PDB" id="3C9M">
    <property type="method" value="X-ray"/>
    <property type="resolution" value="3.40 A"/>
    <property type="chains" value="A=1-348"/>
</dbReference>
<dbReference type="PDB" id="3CAP">
    <property type="method" value="X-ray"/>
    <property type="resolution" value="2.90 A"/>
    <property type="chains" value="A/B=1-348"/>
</dbReference>
<dbReference type="PDB" id="3DQB">
    <property type="method" value="X-ray"/>
    <property type="resolution" value="3.20 A"/>
    <property type="chains" value="A=1-348"/>
</dbReference>
<dbReference type="PDB" id="3OAX">
    <property type="method" value="X-ray"/>
    <property type="resolution" value="2.60 A"/>
    <property type="chains" value="A/B=1-348"/>
</dbReference>
<dbReference type="PDB" id="3PQR">
    <property type="method" value="X-ray"/>
    <property type="resolution" value="2.85 A"/>
    <property type="chains" value="A=1-348"/>
</dbReference>
<dbReference type="PDB" id="3PXO">
    <property type="method" value="X-ray"/>
    <property type="resolution" value="3.00 A"/>
    <property type="chains" value="A=1-348"/>
</dbReference>
<dbReference type="PDB" id="4A4M">
    <property type="method" value="X-ray"/>
    <property type="resolution" value="3.30 A"/>
    <property type="chains" value="A=1-348"/>
</dbReference>
<dbReference type="PDB" id="4BEY">
    <property type="method" value="X-ray"/>
    <property type="resolution" value="2.90 A"/>
    <property type="chains" value="A=1-348"/>
</dbReference>
<dbReference type="PDB" id="4BEZ">
    <property type="method" value="X-ray"/>
    <property type="resolution" value="3.30 A"/>
    <property type="chains" value="A=1-348"/>
</dbReference>
<dbReference type="PDB" id="4J4Q">
    <property type="method" value="X-ray"/>
    <property type="resolution" value="2.65 A"/>
    <property type="chains" value="A=1-348"/>
</dbReference>
<dbReference type="PDB" id="4PXF">
    <property type="method" value="X-ray"/>
    <property type="resolution" value="2.75 A"/>
    <property type="chains" value="A=1-348"/>
</dbReference>
<dbReference type="PDB" id="4X1H">
    <property type="method" value="X-ray"/>
    <property type="resolution" value="2.29 A"/>
    <property type="chains" value="A=1-348"/>
</dbReference>
<dbReference type="PDB" id="5DYS">
    <property type="method" value="X-ray"/>
    <property type="resolution" value="2.30 A"/>
    <property type="chains" value="A=1-348"/>
</dbReference>
<dbReference type="PDB" id="5EN0">
    <property type="method" value="X-ray"/>
    <property type="resolution" value="2.81 A"/>
    <property type="chains" value="A=1-348"/>
</dbReference>
<dbReference type="PDB" id="5TE3">
    <property type="method" value="X-ray"/>
    <property type="resolution" value="2.70 A"/>
    <property type="chains" value="A=1-348"/>
</dbReference>
<dbReference type="PDB" id="5TE5">
    <property type="method" value="X-ray"/>
    <property type="resolution" value="4.01 A"/>
    <property type="chains" value="A=1-348"/>
</dbReference>
<dbReference type="PDB" id="5WKT">
    <property type="method" value="X-ray"/>
    <property type="resolution" value="3.20 A"/>
    <property type="chains" value="A=1-348"/>
</dbReference>
<dbReference type="PDB" id="6FK6">
    <property type="method" value="X-ray"/>
    <property type="resolution" value="2.36 A"/>
    <property type="chains" value="A=1-326"/>
</dbReference>
<dbReference type="PDB" id="6FK7">
    <property type="method" value="X-ray"/>
    <property type="resolution" value="2.62 A"/>
    <property type="chains" value="A=1-348"/>
</dbReference>
<dbReference type="PDB" id="6FK8">
    <property type="method" value="X-ray"/>
    <property type="resolution" value="2.87 A"/>
    <property type="chains" value="A=1-348"/>
</dbReference>
<dbReference type="PDB" id="6FK9">
    <property type="method" value="X-ray"/>
    <property type="resolution" value="2.63 A"/>
    <property type="chains" value="A=1-348"/>
</dbReference>
<dbReference type="PDB" id="6FKA">
    <property type="method" value="X-ray"/>
    <property type="resolution" value="2.70 A"/>
    <property type="chains" value="A=1-348"/>
</dbReference>
<dbReference type="PDB" id="6FKB">
    <property type="method" value="X-ray"/>
    <property type="resolution" value="3.03 A"/>
    <property type="chains" value="A=1-328"/>
</dbReference>
<dbReference type="PDB" id="6FKC">
    <property type="method" value="X-ray"/>
    <property type="resolution" value="2.46 A"/>
    <property type="chains" value="A=1-348"/>
</dbReference>
<dbReference type="PDB" id="6FKD">
    <property type="method" value="X-ray"/>
    <property type="resolution" value="2.49 A"/>
    <property type="chains" value="A=1-348"/>
</dbReference>
<dbReference type="PDB" id="6FUF">
    <property type="method" value="X-ray"/>
    <property type="resolution" value="3.12 A"/>
    <property type="chains" value="A=2-317"/>
</dbReference>
<dbReference type="PDB" id="6NWE">
    <property type="method" value="X-ray"/>
    <property type="resolution" value="2.71 A"/>
    <property type="chains" value="A=1-348"/>
</dbReference>
<dbReference type="PDB" id="6OFJ">
    <property type="method" value="EM"/>
    <property type="resolution" value="4.50 A"/>
    <property type="chains" value="A/B=1-348"/>
</dbReference>
<dbReference type="PDB" id="6OY9">
    <property type="method" value="EM"/>
    <property type="resolution" value="3.90 A"/>
    <property type="chains" value="R=1-348"/>
</dbReference>
<dbReference type="PDB" id="6OYA">
    <property type="method" value="EM"/>
    <property type="resolution" value="3.30 A"/>
    <property type="chains" value="R=1-348"/>
</dbReference>
<dbReference type="PDB" id="6PEL">
    <property type="method" value="X-ray"/>
    <property type="resolution" value="3.19 A"/>
    <property type="chains" value="A=1-348"/>
</dbReference>
<dbReference type="PDB" id="6PGS">
    <property type="method" value="X-ray"/>
    <property type="resolution" value="2.90 A"/>
    <property type="chains" value="A=1-348"/>
</dbReference>
<dbReference type="PDB" id="6PH7">
    <property type="method" value="X-ray"/>
    <property type="resolution" value="2.90 A"/>
    <property type="chains" value="A=1-348"/>
</dbReference>
<dbReference type="PDB" id="6QNO">
    <property type="method" value="EM"/>
    <property type="resolution" value="4.38 A"/>
    <property type="chains" value="R=1-348"/>
</dbReference>
<dbReference type="PDB" id="7MT8">
    <property type="method" value="EM"/>
    <property type="resolution" value="5.80 A"/>
    <property type="chains" value="R=1-348"/>
</dbReference>
<dbReference type="PDB" id="7MT9">
    <property type="method" value="EM"/>
    <property type="resolution" value="7.00 A"/>
    <property type="chains" value="R=1-348"/>
</dbReference>
<dbReference type="PDB" id="7MTA">
    <property type="method" value="EM"/>
    <property type="resolution" value="4.10 A"/>
    <property type="chains" value="R=1-348"/>
</dbReference>
<dbReference type="PDB" id="7MTB">
    <property type="method" value="EM"/>
    <property type="resolution" value="4.00 A"/>
    <property type="chains" value="R=1-348"/>
</dbReference>
<dbReference type="PDB" id="7ZBC">
    <property type="method" value="X-ray"/>
    <property type="resolution" value="1.80 A"/>
    <property type="chains" value="A/B=1-348"/>
</dbReference>
<dbReference type="PDB" id="7ZBE">
    <property type="method" value="X-ray"/>
    <property type="resolution" value="1.80 A"/>
    <property type="chains" value="A/B=1-348"/>
</dbReference>
<dbReference type="PDB" id="8A6C">
    <property type="method" value="X-ray"/>
    <property type="resolution" value="1.80 A"/>
    <property type="chains" value="A/B=1-348"/>
</dbReference>
<dbReference type="PDB" id="8A6D">
    <property type="method" value="X-ray"/>
    <property type="resolution" value="1.80 A"/>
    <property type="chains" value="A/B=1-348"/>
</dbReference>
<dbReference type="PDB" id="8A6E">
    <property type="method" value="X-ray"/>
    <property type="resolution" value="1.80 A"/>
    <property type="chains" value="A/B=1-348"/>
</dbReference>
<dbReference type="PDB" id="8FCZ">
    <property type="method" value="X-ray"/>
    <property type="resolution" value="3.70 A"/>
    <property type="chains" value="A/B=1-348"/>
</dbReference>
<dbReference type="PDB" id="8FD0">
    <property type="method" value="X-ray"/>
    <property type="resolution" value="3.71 A"/>
    <property type="chains" value="A/B=1-348"/>
</dbReference>
<dbReference type="PDB" id="8FD1">
    <property type="method" value="X-ray"/>
    <property type="resolution" value="4.25 A"/>
    <property type="chains" value="A/B=1-348"/>
</dbReference>
<dbReference type="PDB" id="8P12">
    <property type="method" value="EM"/>
    <property type="resolution" value="3.21 A"/>
    <property type="chains" value="R=1-348"/>
</dbReference>
<dbReference type="PDB" id="8P13">
    <property type="method" value="EM"/>
    <property type="resolution" value="5.20 A"/>
    <property type="chains" value="R=1-348"/>
</dbReference>
<dbReference type="PDB" id="8P15">
    <property type="method" value="EM"/>
    <property type="resolution" value="5.90 A"/>
    <property type="chains" value="R=1-348"/>
</dbReference>
<dbReference type="PDB" id="8RJB">
    <property type="method" value="EM"/>
    <property type="resolution" value="2.69 A"/>
    <property type="chains" value="B=32-109"/>
</dbReference>
<dbReference type="PDB" id="8RJC">
    <property type="method" value="EM"/>
    <property type="resolution" value="2.90 A"/>
    <property type="chains" value="B=32-109"/>
</dbReference>
<dbReference type="PDB" id="8RJD">
    <property type="method" value="EM"/>
    <property type="resolution" value="2.79 A"/>
    <property type="chains" value="B=32-109"/>
</dbReference>
<dbReference type="PDBsum" id="1EDS"/>
<dbReference type="PDBsum" id="1EDV"/>
<dbReference type="PDBsum" id="1EDW"/>
<dbReference type="PDBsum" id="1EDX"/>
<dbReference type="PDBsum" id="1F88"/>
<dbReference type="PDBsum" id="1FDF"/>
<dbReference type="PDBsum" id="1GZM"/>
<dbReference type="PDBsum" id="1HZX"/>
<dbReference type="PDBsum" id="1JFP"/>
<dbReference type="PDBsum" id="1L9H"/>
<dbReference type="PDBsum" id="1LN6"/>
<dbReference type="PDBsum" id="1NZS"/>
<dbReference type="PDBsum" id="1U19"/>
<dbReference type="PDBsum" id="1VQX"/>
<dbReference type="PDBsum" id="2G87"/>
<dbReference type="PDBsum" id="2HPY"/>
<dbReference type="PDBsum" id="2I35"/>
<dbReference type="PDBsum" id="2I36"/>
<dbReference type="PDBsum" id="2I37"/>
<dbReference type="PDBsum" id="2J4Y"/>
<dbReference type="PDBsum" id="2PED"/>
<dbReference type="PDBsum" id="2X72"/>
<dbReference type="PDBsum" id="3C9L"/>
<dbReference type="PDBsum" id="3C9M"/>
<dbReference type="PDBsum" id="3CAP"/>
<dbReference type="PDBsum" id="3DQB"/>
<dbReference type="PDBsum" id="3OAX"/>
<dbReference type="PDBsum" id="3PQR"/>
<dbReference type="PDBsum" id="3PXO"/>
<dbReference type="PDBsum" id="4A4M"/>
<dbReference type="PDBsum" id="4BEY"/>
<dbReference type="PDBsum" id="4BEZ"/>
<dbReference type="PDBsum" id="4J4Q"/>
<dbReference type="PDBsum" id="4PXF"/>
<dbReference type="PDBsum" id="4X1H"/>
<dbReference type="PDBsum" id="5DYS"/>
<dbReference type="PDBsum" id="5EN0"/>
<dbReference type="PDBsum" id="5TE3"/>
<dbReference type="PDBsum" id="5TE5"/>
<dbReference type="PDBsum" id="5WKT"/>
<dbReference type="PDBsum" id="6FK6"/>
<dbReference type="PDBsum" id="6FK7"/>
<dbReference type="PDBsum" id="6FK8"/>
<dbReference type="PDBsum" id="6FK9"/>
<dbReference type="PDBsum" id="6FKA"/>
<dbReference type="PDBsum" id="6FKB"/>
<dbReference type="PDBsum" id="6FKC"/>
<dbReference type="PDBsum" id="6FKD"/>
<dbReference type="PDBsum" id="6FUF"/>
<dbReference type="PDBsum" id="6NWE"/>
<dbReference type="PDBsum" id="6OFJ"/>
<dbReference type="PDBsum" id="6OY9"/>
<dbReference type="PDBsum" id="6OYA"/>
<dbReference type="PDBsum" id="6PEL"/>
<dbReference type="PDBsum" id="6PGS"/>
<dbReference type="PDBsum" id="6PH7"/>
<dbReference type="PDBsum" id="6QNO"/>
<dbReference type="PDBsum" id="7MT8"/>
<dbReference type="PDBsum" id="7MT9"/>
<dbReference type="PDBsum" id="7MTA"/>
<dbReference type="PDBsum" id="7MTB"/>
<dbReference type="PDBsum" id="7ZBC"/>
<dbReference type="PDBsum" id="7ZBE"/>
<dbReference type="PDBsum" id="8A6C"/>
<dbReference type="PDBsum" id="8A6D"/>
<dbReference type="PDBsum" id="8A6E"/>
<dbReference type="PDBsum" id="8FCZ"/>
<dbReference type="PDBsum" id="8FD0"/>
<dbReference type="PDBsum" id="8FD1"/>
<dbReference type="PDBsum" id="8P12"/>
<dbReference type="PDBsum" id="8P13"/>
<dbReference type="PDBsum" id="8P15"/>
<dbReference type="PDBsum" id="8RJB"/>
<dbReference type="PDBsum" id="8RJC"/>
<dbReference type="PDBsum" id="8RJD"/>
<dbReference type="BMRB" id="P02699"/>
<dbReference type="EMDB" id="EMD-17343"/>
<dbReference type="EMDB" id="EMD-17344"/>
<dbReference type="EMDB" id="EMD-17345"/>
<dbReference type="EMDB" id="EMD-19195"/>
<dbReference type="EMDB" id="EMD-19197"/>
<dbReference type="EMDB" id="EMD-19198"/>
<dbReference type="EMDB" id="EMD-20047"/>
<dbReference type="EMDB" id="EMD-20222"/>
<dbReference type="EMDB" id="EMD-20223"/>
<dbReference type="EMDB" id="EMD-23977"/>
<dbReference type="EMDB" id="EMD-23978"/>
<dbReference type="EMDB" id="EMD-23979"/>
<dbReference type="EMDB" id="EMD-23980"/>
<dbReference type="EMDB" id="EMD-4598"/>
<dbReference type="SMR" id="P02699"/>
<dbReference type="BioGRID" id="166570">
    <property type="interactions" value="2"/>
</dbReference>
<dbReference type="CORUM" id="P02699"/>
<dbReference type="DIP" id="DIP-29225N"/>
<dbReference type="ELM" id="P02699"/>
<dbReference type="FunCoup" id="P02699">
    <property type="interactions" value="112"/>
</dbReference>
<dbReference type="IntAct" id="P02699">
    <property type="interactions" value="5"/>
</dbReference>
<dbReference type="MINT" id="P02699"/>
<dbReference type="STRING" id="9913.ENSBTAP00000001730"/>
<dbReference type="BindingDB" id="P02699"/>
<dbReference type="ChEMBL" id="CHEMBL5739"/>
<dbReference type="TCDB" id="9.A.14.1.17">
    <property type="family name" value="the g-protein-coupled receptor (gpcr) family"/>
</dbReference>
<dbReference type="GlyConnect" id="523">
    <property type="glycosylation" value="4 N-Linked glycans"/>
</dbReference>
<dbReference type="GlyCosmos" id="P02699">
    <property type="glycosylation" value="2 sites, 7 glycans"/>
</dbReference>
<dbReference type="GlyGen" id="P02699">
    <property type="glycosylation" value="3 sites, 7 N-linked glycans (1 site)"/>
</dbReference>
<dbReference type="iPTMnet" id="P02699"/>
<dbReference type="SwissPalm" id="P02699"/>
<dbReference type="PaxDb" id="9913-ENSBTAP00000001730"/>
<dbReference type="ABCD" id="P02699">
    <property type="antibodies" value="1 sequenced antibody"/>
</dbReference>
<dbReference type="Ensembl" id="ENSBTAT00000001730.7">
    <property type="protein sequence ID" value="ENSBTAP00000001730.5"/>
    <property type="gene ID" value="ENSBTAG00000001310.7"/>
</dbReference>
<dbReference type="GeneID" id="509933"/>
<dbReference type="KEGG" id="bta:509933"/>
<dbReference type="CTD" id="6010"/>
<dbReference type="VEuPathDB" id="HostDB:ENSBTAG00000001310"/>
<dbReference type="VGNC" id="VGNC:33942">
    <property type="gene designation" value="RHO"/>
</dbReference>
<dbReference type="eggNOG" id="KOG3656">
    <property type="taxonomic scope" value="Eukaryota"/>
</dbReference>
<dbReference type="GeneTree" id="ENSGT01030000234549"/>
<dbReference type="HOGENOM" id="CLU_009579_3_0_1"/>
<dbReference type="InParanoid" id="P02699"/>
<dbReference type="OMA" id="EFGPLFM"/>
<dbReference type="OrthoDB" id="5962323at2759"/>
<dbReference type="TreeFam" id="TF324998"/>
<dbReference type="Reactome" id="R-BTA-2453902">
    <property type="pathway name" value="The canonical retinoid cycle in rods (twilight vision)"/>
</dbReference>
<dbReference type="Reactome" id="R-BTA-2485179">
    <property type="pathway name" value="Activation of the phototransduction cascade"/>
</dbReference>
<dbReference type="Reactome" id="R-BTA-2514859">
    <property type="pathway name" value="Inactivation, recovery and regulation of the phototransduction cascade"/>
</dbReference>
<dbReference type="Reactome" id="R-BTA-418594">
    <property type="pathway name" value="G alpha (i) signalling events"/>
</dbReference>
<dbReference type="Reactome" id="R-BTA-419771">
    <property type="pathway name" value="Opsins"/>
</dbReference>
<dbReference type="Reactome" id="R-BTA-5620916">
    <property type="pathway name" value="VxPx cargo-targeting to cilium"/>
</dbReference>
<dbReference type="EvolutionaryTrace" id="P02699"/>
<dbReference type="PRO" id="PR:P02699"/>
<dbReference type="Proteomes" id="UP000009136">
    <property type="component" value="Chromosome 22"/>
</dbReference>
<dbReference type="Bgee" id="ENSBTAG00000001310">
    <property type="expression patterns" value="Expressed in retina and 12 other cell types or tissues"/>
</dbReference>
<dbReference type="GO" id="GO:0005911">
    <property type="term" value="C:cell-cell junction"/>
    <property type="evidence" value="ECO:0007669"/>
    <property type="project" value="Ensembl"/>
</dbReference>
<dbReference type="GO" id="GO:0097648">
    <property type="term" value="C:G protein-coupled receptor complex"/>
    <property type="evidence" value="ECO:0000314"/>
    <property type="project" value="CAFA"/>
</dbReference>
<dbReference type="GO" id="GO:0000139">
    <property type="term" value="C:Golgi membrane"/>
    <property type="evidence" value="ECO:0000304"/>
    <property type="project" value="Reactome"/>
</dbReference>
<dbReference type="GO" id="GO:0016020">
    <property type="term" value="C:membrane"/>
    <property type="evidence" value="ECO:0000314"/>
    <property type="project" value="UniProtKB"/>
</dbReference>
<dbReference type="GO" id="GO:0019867">
    <property type="term" value="C:outer membrane"/>
    <property type="evidence" value="ECO:0000314"/>
    <property type="project" value="CAFA"/>
</dbReference>
<dbReference type="GO" id="GO:0097381">
    <property type="term" value="C:photoreceptor disc membrane"/>
    <property type="evidence" value="ECO:0000250"/>
    <property type="project" value="UniProtKB"/>
</dbReference>
<dbReference type="GO" id="GO:0060342">
    <property type="term" value="C:photoreceptor inner segment membrane"/>
    <property type="evidence" value="ECO:0000250"/>
    <property type="project" value="UniProtKB"/>
</dbReference>
<dbReference type="GO" id="GO:0001750">
    <property type="term" value="C:photoreceptor outer segment"/>
    <property type="evidence" value="ECO:0000318"/>
    <property type="project" value="GO_Central"/>
</dbReference>
<dbReference type="GO" id="GO:0042622">
    <property type="term" value="C:photoreceptor outer segment membrane"/>
    <property type="evidence" value="ECO:0000314"/>
    <property type="project" value="CAFA"/>
</dbReference>
<dbReference type="GO" id="GO:0005886">
    <property type="term" value="C:plasma membrane"/>
    <property type="evidence" value="ECO:0000314"/>
    <property type="project" value="AgBase"/>
</dbReference>
<dbReference type="GO" id="GO:0120200">
    <property type="term" value="C:rod photoreceptor outer segment"/>
    <property type="evidence" value="ECO:0007669"/>
    <property type="project" value="Ensembl"/>
</dbReference>
<dbReference type="GO" id="GO:1990913">
    <property type="term" value="C:sperm head plasma membrane"/>
    <property type="evidence" value="ECO:0007669"/>
    <property type="project" value="Ensembl"/>
</dbReference>
<dbReference type="GO" id="GO:0097225">
    <property type="term" value="C:sperm midpiece"/>
    <property type="evidence" value="ECO:0007669"/>
    <property type="project" value="Ensembl"/>
</dbReference>
<dbReference type="GO" id="GO:0005502">
    <property type="term" value="F:11-cis retinal binding"/>
    <property type="evidence" value="ECO:0000314"/>
    <property type="project" value="UniProtKB"/>
</dbReference>
<dbReference type="GO" id="GO:1990763">
    <property type="term" value="F:arrestin family protein binding"/>
    <property type="evidence" value="ECO:0000353"/>
    <property type="project" value="CAFA"/>
</dbReference>
<dbReference type="GO" id="GO:0008020">
    <property type="term" value="F:G protein-coupled photoreceptor activity"/>
    <property type="evidence" value="ECO:0000314"/>
    <property type="project" value="UniProtKB"/>
</dbReference>
<dbReference type="GO" id="GO:0001965">
    <property type="term" value="F:G-protein alpha-subunit binding"/>
    <property type="evidence" value="ECO:0000353"/>
    <property type="project" value="CAFA"/>
</dbReference>
<dbReference type="GO" id="GO:0005085">
    <property type="term" value="F:guanyl-nucleotide exchange factor activity"/>
    <property type="evidence" value="ECO:0000314"/>
    <property type="project" value="UniProtKB"/>
</dbReference>
<dbReference type="GO" id="GO:0042802">
    <property type="term" value="F:identical protein binding"/>
    <property type="evidence" value="ECO:0000353"/>
    <property type="project" value="IntAct"/>
</dbReference>
<dbReference type="GO" id="GO:0002046">
    <property type="term" value="F:opsin binding"/>
    <property type="evidence" value="ECO:0000314"/>
    <property type="project" value="CAFA"/>
</dbReference>
<dbReference type="GO" id="GO:0008270">
    <property type="term" value="F:zinc ion binding"/>
    <property type="evidence" value="ECO:0000314"/>
    <property type="project" value="CAFA"/>
</dbReference>
<dbReference type="GO" id="GO:0016038">
    <property type="term" value="P:absorption of visible light"/>
    <property type="evidence" value="ECO:0000314"/>
    <property type="project" value="UniProtKB"/>
</dbReference>
<dbReference type="GO" id="GO:0071482">
    <property type="term" value="P:cellular response to light stimulus"/>
    <property type="evidence" value="ECO:0000318"/>
    <property type="project" value="GO_Central"/>
</dbReference>
<dbReference type="GO" id="GO:0050960">
    <property type="term" value="P:detection of temperature stimulus involved in thermoception"/>
    <property type="evidence" value="ECO:0007669"/>
    <property type="project" value="Ensembl"/>
</dbReference>
<dbReference type="GO" id="GO:0016056">
    <property type="term" value="P:G protein-coupled opsin signaling pathway"/>
    <property type="evidence" value="ECO:0000314"/>
    <property type="project" value="UniProtKB"/>
</dbReference>
<dbReference type="GO" id="GO:0007186">
    <property type="term" value="P:G protein-coupled receptor signaling pathway"/>
    <property type="evidence" value="ECO:0000318"/>
    <property type="project" value="GO_Central"/>
</dbReference>
<dbReference type="GO" id="GO:0010467">
    <property type="term" value="P:gene expression"/>
    <property type="evidence" value="ECO:0007669"/>
    <property type="project" value="Ensembl"/>
</dbReference>
<dbReference type="GO" id="GO:0000226">
    <property type="term" value="P:microtubule cytoskeleton organization"/>
    <property type="evidence" value="ECO:0007669"/>
    <property type="project" value="Ensembl"/>
</dbReference>
<dbReference type="GO" id="GO:0045494">
    <property type="term" value="P:photoreceptor cell maintenance"/>
    <property type="evidence" value="ECO:0007669"/>
    <property type="project" value="Ensembl"/>
</dbReference>
<dbReference type="GO" id="GO:0007602">
    <property type="term" value="P:phototransduction"/>
    <property type="evidence" value="ECO:0000318"/>
    <property type="project" value="GO_Central"/>
</dbReference>
<dbReference type="GO" id="GO:0007603">
    <property type="term" value="P:phototransduction, visible light"/>
    <property type="evidence" value="ECO:0000314"/>
    <property type="project" value="AgBase"/>
</dbReference>
<dbReference type="GO" id="GO:0071800">
    <property type="term" value="P:podosome assembly"/>
    <property type="evidence" value="ECO:0007669"/>
    <property type="project" value="Ensembl"/>
</dbReference>
<dbReference type="GO" id="GO:0009642">
    <property type="term" value="P:response to light intensity"/>
    <property type="evidence" value="ECO:0007669"/>
    <property type="project" value="Ensembl"/>
</dbReference>
<dbReference type="GO" id="GO:0009416">
    <property type="term" value="P:response to light stimulus"/>
    <property type="evidence" value="ECO:0000314"/>
    <property type="project" value="CAFA"/>
</dbReference>
<dbReference type="GO" id="GO:1904389">
    <property type="term" value="P:rod bipolar cell differentiation"/>
    <property type="evidence" value="ECO:0007669"/>
    <property type="project" value="Ensembl"/>
</dbReference>
<dbReference type="GO" id="GO:0043052">
    <property type="term" value="P:thermotaxis"/>
    <property type="evidence" value="ECO:0007669"/>
    <property type="project" value="Ensembl"/>
</dbReference>
<dbReference type="GO" id="GO:0007601">
    <property type="term" value="P:visual perception"/>
    <property type="evidence" value="ECO:0007669"/>
    <property type="project" value="UniProtKB-KW"/>
</dbReference>
<dbReference type="CDD" id="cd15080">
    <property type="entry name" value="7tmA_MWS_opsin"/>
    <property type="match status" value="1"/>
</dbReference>
<dbReference type="DisProt" id="DP00271"/>
<dbReference type="FunFam" id="1.20.1070.10:FF:000018">
    <property type="entry name" value="Rhodopsin"/>
    <property type="match status" value="1"/>
</dbReference>
<dbReference type="Gene3D" id="1.20.1070.10">
    <property type="entry name" value="Rhodopsin 7-helix transmembrane proteins"/>
    <property type="match status" value="1"/>
</dbReference>
<dbReference type="IDEAL" id="IID50247"/>
<dbReference type="InterPro" id="IPR050125">
    <property type="entry name" value="GPCR_opsins"/>
</dbReference>
<dbReference type="InterPro" id="IPR000276">
    <property type="entry name" value="GPCR_Rhodpsn"/>
</dbReference>
<dbReference type="InterPro" id="IPR017452">
    <property type="entry name" value="GPCR_Rhodpsn_7TM"/>
</dbReference>
<dbReference type="InterPro" id="IPR001760">
    <property type="entry name" value="Opsin"/>
</dbReference>
<dbReference type="InterPro" id="IPR027430">
    <property type="entry name" value="Retinal_BS"/>
</dbReference>
<dbReference type="InterPro" id="IPR000732">
    <property type="entry name" value="Rhodopsin"/>
</dbReference>
<dbReference type="InterPro" id="IPR019477">
    <property type="entry name" value="Rhodopsin_N"/>
</dbReference>
<dbReference type="PANTHER" id="PTHR24240">
    <property type="entry name" value="OPSIN"/>
    <property type="match status" value="1"/>
</dbReference>
<dbReference type="Pfam" id="PF00001">
    <property type="entry name" value="7tm_1"/>
    <property type="match status" value="1"/>
</dbReference>
<dbReference type="Pfam" id="PF10413">
    <property type="entry name" value="Rhodopsin_N"/>
    <property type="match status" value="1"/>
</dbReference>
<dbReference type="PRINTS" id="PR00237">
    <property type="entry name" value="GPCRRHODOPSN"/>
</dbReference>
<dbReference type="PRINTS" id="PR00238">
    <property type="entry name" value="OPSIN"/>
</dbReference>
<dbReference type="PRINTS" id="PR00579">
    <property type="entry name" value="RHODOPSIN"/>
</dbReference>
<dbReference type="SMART" id="SM01381">
    <property type="entry name" value="7TM_GPCR_Srsx"/>
    <property type="match status" value="1"/>
</dbReference>
<dbReference type="SUPFAM" id="SSF81321">
    <property type="entry name" value="Family A G protein-coupled receptor-like"/>
    <property type="match status" value="1"/>
</dbReference>
<dbReference type="PROSITE" id="PS00237">
    <property type="entry name" value="G_PROTEIN_RECEP_F1_1"/>
    <property type="match status" value="1"/>
</dbReference>
<dbReference type="PROSITE" id="PS50262">
    <property type="entry name" value="G_PROTEIN_RECEP_F1_2"/>
    <property type="match status" value="1"/>
</dbReference>
<dbReference type="PROSITE" id="PS00238">
    <property type="entry name" value="OPSIN"/>
    <property type="match status" value="1"/>
</dbReference>
<name>OPSD_BOVIN</name>
<evidence type="ECO:0000250" key="1">
    <source>
        <dbReference type="UniProtKB" id="P08100"/>
    </source>
</evidence>
<evidence type="ECO:0000255" key="2">
    <source>
        <dbReference type="PROSITE-ProRule" id="PRU00521"/>
    </source>
</evidence>
<evidence type="ECO:0000269" key="3">
    <source>
    </source>
</evidence>
<evidence type="ECO:0000269" key="4">
    <source>
    </source>
</evidence>
<evidence type="ECO:0000269" key="5">
    <source>
    </source>
</evidence>
<evidence type="ECO:0000269" key="6">
    <source>
    </source>
</evidence>
<evidence type="ECO:0000269" key="7">
    <source>
    </source>
</evidence>
<evidence type="ECO:0000269" key="8">
    <source>
    </source>
</evidence>
<evidence type="ECO:0000269" key="9">
    <source>
    </source>
</evidence>
<evidence type="ECO:0000269" key="10">
    <source>
    </source>
</evidence>
<evidence type="ECO:0000269" key="11">
    <source>
    </source>
</evidence>
<evidence type="ECO:0000269" key="12">
    <source>
    </source>
</evidence>
<evidence type="ECO:0000269" key="13">
    <source>
    </source>
</evidence>
<evidence type="ECO:0000269" key="14">
    <source>
    </source>
</evidence>
<evidence type="ECO:0000269" key="15">
    <source>
    </source>
</evidence>
<evidence type="ECO:0000269" key="16">
    <source>
    </source>
</evidence>
<evidence type="ECO:0000269" key="17">
    <source>
    </source>
</evidence>
<evidence type="ECO:0000269" key="18">
    <source>
    </source>
</evidence>
<evidence type="ECO:0000269" key="19">
    <source>
    </source>
</evidence>
<evidence type="ECO:0000269" key="20">
    <source>
    </source>
</evidence>
<evidence type="ECO:0000269" key="21">
    <source>
    </source>
</evidence>
<evidence type="ECO:0000269" key="22">
    <source>
    </source>
</evidence>
<evidence type="ECO:0000269" key="23">
    <source>
    </source>
</evidence>
<evidence type="ECO:0000269" key="24">
    <source>
    </source>
</evidence>
<evidence type="ECO:0000269" key="25">
    <source>
    </source>
</evidence>
<evidence type="ECO:0000269" key="26">
    <source>
    </source>
</evidence>
<evidence type="ECO:0000269" key="27">
    <source>
    </source>
</evidence>
<evidence type="ECO:0000269" key="28">
    <source>
    </source>
</evidence>
<evidence type="ECO:0000269" key="29">
    <source>
    </source>
</evidence>
<evidence type="ECO:0000269" key="30">
    <source>
    </source>
</evidence>
<evidence type="ECO:0000269" key="31">
    <source>
    </source>
</evidence>
<evidence type="ECO:0000269" key="32">
    <source>
    </source>
</evidence>
<evidence type="ECO:0000269" key="33">
    <source>
    </source>
</evidence>
<evidence type="ECO:0000269" key="34">
    <source>
    </source>
</evidence>
<evidence type="ECO:0000269" key="35">
    <source>
    </source>
</evidence>
<evidence type="ECO:0000269" key="36">
    <source>
    </source>
</evidence>
<evidence type="ECO:0000269" key="37">
    <source>
    </source>
</evidence>
<evidence type="ECO:0000269" key="38">
    <source>
    </source>
</evidence>
<evidence type="ECO:0000305" key="39"/>
<evidence type="ECO:0000305" key="40">
    <source>
    </source>
</evidence>
<evidence type="ECO:0000305" key="41">
    <source>
    </source>
</evidence>
<evidence type="ECO:0000305" key="42">
    <source>
    </source>
</evidence>
<evidence type="ECO:0000305" key="43">
    <source>
    </source>
</evidence>
<evidence type="ECO:0000305" key="44">
    <source>
    </source>
</evidence>
<evidence type="ECO:0000305" key="45">
    <source>
    </source>
</evidence>
<evidence type="ECO:0000305" key="46">
    <source>
    </source>
</evidence>
<evidence type="ECO:0000305" key="47">
    <source>
    </source>
</evidence>
<evidence type="ECO:0000305" key="48">
    <source>
    </source>
</evidence>
<evidence type="ECO:0000305" key="49">
    <source>
    </source>
</evidence>
<evidence type="ECO:0007744" key="50">
    <source>
        <dbReference type="PDB" id="1F88"/>
    </source>
</evidence>
<evidence type="ECO:0007744" key="51">
    <source>
        <dbReference type="PDB" id="1GZM"/>
    </source>
</evidence>
<evidence type="ECO:0007744" key="52">
    <source>
        <dbReference type="PDB" id="1HZX"/>
    </source>
</evidence>
<evidence type="ECO:0007744" key="53">
    <source>
        <dbReference type="PDB" id="1JFP"/>
    </source>
</evidence>
<evidence type="ECO:0007744" key="54">
    <source>
        <dbReference type="PDB" id="1L9H"/>
    </source>
</evidence>
<evidence type="ECO:0007744" key="55">
    <source>
        <dbReference type="PDB" id="1LN6"/>
    </source>
</evidence>
<evidence type="ECO:0007744" key="56">
    <source>
        <dbReference type="PDB" id="1NZS"/>
    </source>
</evidence>
<evidence type="ECO:0007744" key="57">
    <source>
        <dbReference type="PDB" id="1U19"/>
    </source>
</evidence>
<evidence type="ECO:0007744" key="58">
    <source>
        <dbReference type="PDB" id="2G87"/>
    </source>
</evidence>
<evidence type="ECO:0007744" key="59">
    <source>
        <dbReference type="PDB" id="2HPY"/>
    </source>
</evidence>
<evidence type="ECO:0007744" key="60">
    <source>
        <dbReference type="PDB" id="2I35"/>
    </source>
</evidence>
<evidence type="ECO:0007744" key="61">
    <source>
        <dbReference type="PDB" id="2I36"/>
    </source>
</evidence>
<evidence type="ECO:0007744" key="62">
    <source>
        <dbReference type="PDB" id="2I37"/>
    </source>
</evidence>
<evidence type="ECO:0007744" key="63">
    <source>
        <dbReference type="PDB" id="2J4Y"/>
    </source>
</evidence>
<evidence type="ECO:0007744" key="64">
    <source>
        <dbReference type="PDB" id="2PED"/>
    </source>
</evidence>
<evidence type="ECO:0007744" key="65">
    <source>
        <dbReference type="PDB" id="2X72"/>
    </source>
</evidence>
<evidence type="ECO:0007744" key="66">
    <source>
        <dbReference type="PDB" id="3C9L"/>
    </source>
</evidence>
<evidence type="ECO:0007744" key="67">
    <source>
        <dbReference type="PDB" id="3C9M"/>
    </source>
</evidence>
<evidence type="ECO:0007744" key="68">
    <source>
        <dbReference type="PDB" id="3CAP"/>
    </source>
</evidence>
<evidence type="ECO:0007744" key="69">
    <source>
        <dbReference type="PDB" id="3DQB"/>
    </source>
</evidence>
<evidence type="ECO:0007744" key="70">
    <source>
        <dbReference type="PDB" id="3OAX"/>
    </source>
</evidence>
<evidence type="ECO:0007744" key="71">
    <source>
        <dbReference type="PDB" id="3PQR"/>
    </source>
</evidence>
<evidence type="ECO:0007744" key="72">
    <source>
        <dbReference type="PDB" id="3PXO"/>
    </source>
</evidence>
<evidence type="ECO:0007744" key="73">
    <source>
        <dbReference type="PDB" id="4A4M"/>
    </source>
</evidence>
<evidence type="ECO:0007744" key="74">
    <source>
        <dbReference type="PDB" id="4BEY"/>
    </source>
</evidence>
<evidence type="ECO:0007744" key="75">
    <source>
        <dbReference type="PDB" id="4BEZ"/>
    </source>
</evidence>
<evidence type="ECO:0007744" key="76">
    <source>
        <dbReference type="PDB" id="4J4Q"/>
    </source>
</evidence>
<evidence type="ECO:0007744" key="77">
    <source>
        <dbReference type="PDB" id="4PXF"/>
    </source>
</evidence>
<evidence type="ECO:0007744" key="78">
    <source>
        <dbReference type="PDB" id="4X1H"/>
    </source>
</evidence>
<evidence type="ECO:0007744" key="79">
    <source>
        <dbReference type="PDB" id="5DYS"/>
    </source>
</evidence>
<evidence type="ECO:0007744" key="80">
    <source>
        <dbReference type="PDB" id="5EN0"/>
    </source>
</evidence>
<evidence type="ECO:0007744" key="81">
    <source>
        <dbReference type="PDB" id="5TE3"/>
    </source>
</evidence>
<evidence type="ECO:0007744" key="82">
    <source>
        <dbReference type="PDB" id="5TE5"/>
    </source>
</evidence>
<evidence type="ECO:0007829" key="83">
    <source>
        <dbReference type="PDB" id="1EDS"/>
    </source>
</evidence>
<evidence type="ECO:0007829" key="84">
    <source>
        <dbReference type="PDB" id="1EDV"/>
    </source>
</evidence>
<evidence type="ECO:0007829" key="85">
    <source>
        <dbReference type="PDB" id="1JFP"/>
    </source>
</evidence>
<evidence type="ECO:0007829" key="86">
    <source>
        <dbReference type="PDB" id="1L9H"/>
    </source>
</evidence>
<evidence type="ECO:0007829" key="87">
    <source>
        <dbReference type="PDB" id="1LN6"/>
    </source>
</evidence>
<evidence type="ECO:0007829" key="88">
    <source>
        <dbReference type="PDB" id="1NZS"/>
    </source>
</evidence>
<evidence type="ECO:0007829" key="89">
    <source>
        <dbReference type="PDB" id="1U19"/>
    </source>
</evidence>
<evidence type="ECO:0007829" key="90">
    <source>
        <dbReference type="PDB" id="3C9L"/>
    </source>
</evidence>
<evidence type="ECO:0007829" key="91">
    <source>
        <dbReference type="PDB" id="4PXF"/>
    </source>
</evidence>
<evidence type="ECO:0007829" key="92">
    <source>
        <dbReference type="PDB" id="4X1H"/>
    </source>
</evidence>
<evidence type="ECO:0007829" key="93">
    <source>
        <dbReference type="PDB" id="7ZBC"/>
    </source>
</evidence>
<reference key="1">
    <citation type="journal article" date="1982" name="FEBS Lett.">
        <title>Rhodopsin and bacteriorhodopsin: structure-function relationships.</title>
        <authorList>
            <person name="Ovchinnikov Y.A."/>
        </authorList>
    </citation>
    <scope>PROTEIN SEQUENCE</scope>
    <scope>RETINAL-BINDING SITE AT LYS-296</scope>
    <scope>ACETYLATION AT MET-1</scope>
</reference>
<reference key="2">
    <citation type="journal article" date="1983" name="Cell">
        <title>Isolation, sequence analysis, and intron-exon arrangement of the gene encoding bovine rhodopsin.</title>
        <authorList>
            <person name="Nathans J."/>
            <person name="Hogness D.S."/>
        </authorList>
    </citation>
    <scope>NUCLEOTIDE SEQUENCE [GENOMIC DNA]</scope>
</reference>
<reference key="3">
    <citation type="journal article" date="1986" name="Brain Res.">
        <title>Multiple opsin mRNA species in bovine retina.</title>
        <authorList>
            <person name="Kuo C.-H."/>
            <person name="Yamagata K."/>
            <person name="Moyzis R.K."/>
            <person name="Bitensky M.W."/>
            <person name="Miki N."/>
        </authorList>
    </citation>
    <scope>NUCLEOTIDE SEQUENCE [MRNA] OF 6-348</scope>
</reference>
<reference key="4">
    <citation type="journal article" date="1983" name="Biochem. Biophys. Res. Commun.">
        <title>Isolation and nucleotide sequence of a partial cDNA clone for bovine opsin.</title>
        <authorList>
            <person name="Koike S."/>
            <person name="Nabeshima Y."/>
            <person name="Ogata K."/>
            <person name="Fukui T."/>
            <person name="Ohtsuka E."/>
            <person name="Ikehara M."/>
            <person name="Tokunaga F."/>
        </authorList>
    </citation>
    <scope>NUCLEOTIDE SEQUENCE [MRNA] OF 205-348</scope>
</reference>
<reference key="5">
    <citation type="journal article" date="1998" name="Protein Sci.">
        <title>Mass spectrometric analysis of integral membrane proteins: application to complete mapping of bacteriorhodopsins and rhodopsin.</title>
        <authorList>
            <person name="Ball L.E."/>
            <person name="Oatis J.E. Jr."/>
            <person name="Dharmasiri K."/>
            <person name="Busman M."/>
            <person name="Wang J."/>
            <person name="Cowden L.B."/>
            <person name="Galijatovic A."/>
            <person name="Chen N."/>
            <person name="Crouch R.K."/>
            <person name="Knapp D.R."/>
        </authorList>
    </citation>
    <scope>PARTIAL PROTEIN SEQUENCE</scope>
    <scope>IDENTIFICATION BY MASS SPECTROMETRY</scope>
    <scope>SUBCELLULAR LOCATION</scope>
    <scope>TISSUE SPECIFICITY</scope>
    <source>
        <tissue>Retina</tissue>
    </source>
</reference>
<reference key="6">
    <citation type="journal article" date="1979" name="J. Biol. Chem.">
        <title>Rhodopsin carbohydrate. Structure of small oligosaccharides attached at two sites near the NH2 terminus.</title>
        <authorList>
            <person name="Fukuda M.N."/>
            <person name="Papermaster D.S."/>
            <person name="Hargrave P.A."/>
        </authorList>
    </citation>
    <scope>GLYCOSYLATION AT ASN-2 AND ASN-15</scope>
</reference>
<reference key="7">
    <citation type="journal article" date="1983" name="Biochem. J.">
        <title>Structural studies on membrane-bound bovine rhodopsin.</title>
        <authorList>
            <person name="Mullen E."/>
            <person name="Akhtar M."/>
        </authorList>
    </citation>
    <scope>RETINAL-BINDING SITE</scope>
    <scope>PARTIAL PROTEIN SEQUENCE</scope>
</reference>
<reference key="8">
    <citation type="journal article" date="1988" name="FEBS Lett.">
        <title>Two adjacent cysteine residues in the C-terminal cytoplasmic fragment of bovine rhodopsin are palmitylated.</title>
        <authorList>
            <person name="Ovchinnikov Y.A."/>
            <person name="Abdulaev N.G."/>
            <person name="Bogachuk A.S."/>
        </authorList>
    </citation>
    <scope>PALMITOYLATION AT CYS-322 AND CYS-323</scope>
    <scope>SUBCELLULAR LOCATION</scope>
    <scope>TISSUE SPECIFICITY</scope>
</reference>
<reference key="9">
    <citation type="journal article" date="1990" name="J. Biol. Chem.">
        <title>Assembly of functional rhodopsin requires a disulfide bond between cysteine residues 110 and 187.</title>
        <authorList>
            <person name="Karnik S.S."/>
            <person name="Khorana H.G."/>
        </authorList>
    </citation>
    <scope>DISULFIDE BOND</scope>
</reference>
<reference key="10">
    <citation type="journal article" date="1992" name="Eur. J. Biochem.">
        <title>Mechanistic studies on rhodopsin kinase. Light-dependent phosphorylation of C-terminal peptides of rhodopsin.</title>
        <authorList>
            <person name="Brown N.G."/>
            <person name="Fowles C."/>
            <person name="Sharma R."/>
            <person name="Akhtar M."/>
        </authorList>
    </citation>
    <scope>PHOSPHORYLATION AT SER-343</scope>
    <scope>FUNCTION</scope>
</reference>
<reference key="11">
    <citation type="journal article" date="1992" name="J. Biol. Chem.">
        <title>Palmitylation of a G-protein coupled receptor. Direct analysis by tandem mass spectrometry.</title>
        <authorList>
            <person name="Papac D.I."/>
            <person name="Thornburg K.R."/>
            <person name="Buellesbach E.E."/>
            <person name="Crouch R.K."/>
            <person name="Knapp D.R."/>
        </authorList>
    </citation>
    <scope>PALMITOYLATION AT CYS-322 AND CYS-323</scope>
</reference>
<reference key="12">
    <citation type="journal article" date="1997" name="Proc. Natl. Acad. Sci. U.S.A.">
        <title>Structure and function in rhodopsin: topology of the C-terminal polypeptide chain in relation to the cytoplasmic loops.</title>
        <authorList>
            <person name="Cai K."/>
            <person name="Langen R."/>
            <person name="Hubbell W.L."/>
            <person name="Khorana H.G."/>
        </authorList>
    </citation>
    <scope>MUTAGENESIS</scope>
</reference>
<reference key="13">
    <citation type="journal article" date="2006" name="J. Biol. Chem.">
        <title>Structural basis for calcium-induced inhibition of rhodopsin kinase by recoverin.</title>
        <authorList>
            <person name="Ames J.B."/>
            <person name="Levay K."/>
            <person name="Wingard J.N."/>
            <person name="Lusin J.D."/>
            <person name="Slepak V.Z."/>
        </authorList>
    </citation>
    <scope>INTERACTION WITH RCVRN AND GRK1</scope>
</reference>
<reference key="14">
    <citation type="journal article" date="2013" name="FASEB J.">
        <title>Asymmetry of the rhodopsin dimer in complex with transducin.</title>
        <authorList>
            <person name="Jastrzebska B."/>
            <person name="Orban T."/>
            <person name="Golczak M."/>
            <person name="Engel A."/>
            <person name="Palczewski K."/>
        </authorList>
    </citation>
    <scope>SUBUNIT</scope>
    <scope>INTERACTION WITH GNAT1</scope>
    <scope>RETINAL-BINDING</scope>
    <scope>TISSUE SPECIFICITY</scope>
    <scope>SUBCELLULAR LOCATION</scope>
    <scope>IDENTIFICATION BY MASS SPECTROMETRY</scope>
</reference>
<reference key="15">
    <citation type="journal article" date="2015" name="J. Cell Sci.">
        <title>The Arf and Rab11 effector FIP3 acts synergistically with ASAP1 to direct Rabin8 in ciliary receptor targeting.</title>
        <authorList>
            <person name="Wang J."/>
            <person name="Deretic D."/>
        </authorList>
    </citation>
    <scope>INTERACTION WITH ASAP1; RAB11A; RAB11FIP3 AND ARF4</scope>
</reference>
<reference key="16">
    <citation type="journal article" date="2015" name="Nature">
        <title>Crystal structure of rhodopsin bound to arrestin by femtosecond X-ray laser.</title>
        <authorList>
            <person name="Kang Y."/>
            <person name="Zhou X.E."/>
            <person name="Gao X."/>
            <person name="He Y."/>
            <person name="Liu W."/>
            <person name="Ishchenko A."/>
            <person name="Barty A."/>
            <person name="White T.A."/>
            <person name="Yefanov O."/>
            <person name="Han G.W."/>
            <person name="Xu Q."/>
            <person name="de Waal P.W."/>
            <person name="Ke J."/>
            <person name="Tan M.H."/>
            <person name="Zhang C."/>
            <person name="Moeller A."/>
            <person name="West G.M."/>
            <person name="Pascal B.D."/>
            <person name="Van Eps N."/>
            <person name="Caro L.N."/>
            <person name="Vishnivetskiy S.A."/>
            <person name="Lee R.J."/>
            <person name="Suino-Powell K.M."/>
            <person name="Gu X."/>
            <person name="Pal K."/>
            <person name="Ma J."/>
            <person name="Zhi X."/>
            <person name="Boutet S."/>
            <person name="Williams G.J."/>
            <person name="Messerschmidt M."/>
            <person name="Gati C."/>
            <person name="Zatsepin N.A."/>
            <person name="Wang D."/>
            <person name="James D."/>
            <person name="Basu S."/>
            <person name="Roy-Chowdhury S."/>
            <person name="Conrad C.E."/>
            <person name="Coe J."/>
            <person name="Liu H."/>
            <person name="Lisova S."/>
            <person name="Kupitz C."/>
            <person name="Grotjohann I."/>
            <person name="Fromme R."/>
            <person name="Jiang Y."/>
            <person name="Tan M."/>
            <person name="Yang H."/>
            <person name="Li J."/>
            <person name="Wang M."/>
            <person name="Zheng Z."/>
            <person name="Li D."/>
            <person name="Howe N."/>
            <person name="Zhao Y."/>
            <person name="Standfuss J."/>
            <person name="Diederichs K."/>
            <person name="Dong Y."/>
            <person name="Potter C.S."/>
            <person name="Carragher B."/>
            <person name="Caffrey M."/>
            <person name="Jiang H."/>
            <person name="Chapman H.N."/>
            <person name="Spence J.C."/>
            <person name="Fromme P."/>
            <person name="Weierstall U."/>
            <person name="Ernst O.P."/>
            <person name="Katritch V."/>
            <person name="Gurevich V.V."/>
            <person name="Griffin P.R."/>
            <person name="Hubbell W.L."/>
            <person name="Stevens R.C."/>
            <person name="Cherezov V."/>
            <person name="Melcher K."/>
            <person name="Xu H.E."/>
        </authorList>
    </citation>
    <scope>INTERACTION WITH SAG</scope>
</reference>
<reference key="17">
    <citation type="journal article" date="2016" name="Biochemistry">
        <title>Progressive Rod-Cone Degeneration (PRCD) Protein Requires N-Terminal S-Acylation and Rhodopsin Binding for Photoreceptor Outer Segment Localization and Maintaining Intracellular Stability.</title>
        <authorList>
            <person name="Spencer W.J."/>
            <person name="Pearring J.N."/>
            <person name="Salinas R.Y."/>
            <person name="Loiselle D.R."/>
            <person name="Skiba N.P."/>
            <person name="Arshavsky V.Y."/>
        </authorList>
    </citation>
    <scope>INTERACTION WITH PRCD</scope>
    <scope>SUBCELLULAR LOCATION</scope>
    <scope>IDENTIFICATION BY MASS SPECTROMETRY</scope>
</reference>
<reference key="18">
    <citation type="journal article" date="2017" name="J. Biol. Chem.">
        <title>Isolation and structure-function characterization of a signaling-active rhodopsin-G protein complex.</title>
        <authorList>
            <person name="Gao Y."/>
            <person name="Westfield G."/>
            <person name="Erickson J.W."/>
            <person name="Cerione R.A."/>
            <person name="Skiniotis G."/>
            <person name="Ramachandran S."/>
        </authorList>
    </citation>
    <scope>SUBCELLULAR LOCATION</scope>
    <scope>SUBUNIT</scope>
    <scope>TISSUE SPECIFICITY</scope>
</reference>
<reference key="19">
    <citation type="journal article" date="2000" name="Science">
        <title>Crystal structure of rhodopsin: a G protein-coupled receptor.</title>
        <authorList>
            <person name="Palczewski K."/>
            <person name="Kumasaka T."/>
            <person name="Hori T."/>
            <person name="Behnke C.A."/>
            <person name="Motoshima H."/>
            <person name="Fox B.A."/>
            <person name="Le Trong I."/>
            <person name="Teller D.C."/>
            <person name="Okada T."/>
            <person name="Stenkamp R.E."/>
            <person name="Yamamoto M."/>
            <person name="Miyano M."/>
        </authorList>
    </citation>
    <scope>X-RAY CRYSTALLOGRAPHY (2.8 ANGSTROMS) IN COMPLEX WITH ZINC ION AND ALL-TRANS-RETINAL</scope>
    <scope>FUNCTION</scope>
    <scope>SUBCELLULAR LOCATION</scope>
    <scope>TOPOLOGY</scope>
    <scope>GLYCOSYLATION AT ASN-2 AND ASN-15</scope>
    <scope>DISULFIDE BOND</scope>
</reference>
<reference evidence="52" key="20">
    <citation type="journal article" date="2001" name="Biochemistry">
        <title>Advances in determination of a high-resolution three-dimensional structure of rhodopsin, a model of G-protein-coupled receptors (GPCRs).</title>
        <authorList>
            <person name="Teller D.C."/>
            <person name="Okada T."/>
            <person name="Behnke C.A."/>
            <person name="Palczewski K."/>
            <person name="Stenkamp R.E."/>
        </authorList>
    </citation>
    <scope>X-RAY CRYSTALLOGRAPHY (2.80 ANGSTROMS) IN COMPLEX WITH RETINAL CHROMOPHORE AND ZINC ION</scope>
    <scope>PALMITOYLATION AT CYS-322 AND CYS-323</scope>
    <scope>TOPOLOGY</scope>
    <scope>GLYCOSYLATION AT ASN-2 AND ASN-15</scope>
    <scope>DISULFIDE BOND</scope>
</reference>
<reference key="21">
    <citation type="journal article" date="2001" name="Biochemistry">
        <title>Studies on the structure of the G-protein-coupled receptor rhodopsin including the putative G-protein binding site in unactivated and activated forms.</title>
        <authorList>
            <person name="Yeagle P.L."/>
            <person name="Choi G."/>
            <person name="Albert A.D."/>
        </authorList>
    </citation>
    <scope>STRUCTURE BY NMR IN INACTIVATED AND ACTIVATED FORMS</scope>
</reference>
<reference key="22">
    <citation type="journal article" date="2002" name="Biochemistry">
        <title>Structural studies of metarhodopsin II, the activated form of the G-protein coupled receptor, rhodopsin.</title>
        <authorList>
            <person name="Choi G."/>
            <person name="Landin J."/>
            <person name="Galan J.F."/>
            <person name="Birge R.R."/>
            <person name="Albert A.D."/>
            <person name="Yeagle P.L."/>
        </authorList>
    </citation>
    <scope>STRUCTURE BY NMR IN INACTIVATED AND ACTIVATED FORMS IN COMPLEX WITH ALL-TRANS-RETINAL</scope>
    <scope>FUNCTION</scope>
    <scope>TOPOLOGY</scope>
    <scope>DISULFIDE BOND</scope>
</reference>
<reference evidence="54" key="23">
    <citation type="journal article" date="2002" name="Proc. Natl. Acad. Sci. U.S.A.">
        <title>Functional role of internal water molecules in rhodopsin revealed by X-ray crystallography.</title>
        <authorList>
            <person name="Okada T."/>
            <person name="Fujiyoshi Y."/>
            <person name="Silow M."/>
            <person name="Navarro J."/>
            <person name="Landau E.M."/>
            <person name="Shichida Y."/>
        </authorList>
    </citation>
    <scope>X-RAY CRYSTALLOGRAPHY (2.60 ANGSTROMS) IN COMPLEX WITH ZINC AND ALL-TRANS-RETINAL</scope>
    <scope>TOPOLOGY</scope>
    <scope>GLYCOSYLATION AT ASN-15</scope>
    <scope>PALMITOYLATION AT CYS-322 AND CYS-323</scope>
    <scope>DISULFIDE BONDS</scope>
</reference>
<reference key="24">
    <citation type="journal article" date="2004" name="FEBS Lett.">
        <title>The arrestin-bound conformation and dynamics of the phosphorylated carboxy-terminal region of rhodopsin.</title>
        <authorList>
            <person name="Kisselev O.G."/>
            <person name="McDowell J.H."/>
            <person name="Hargrave P.A."/>
        </authorList>
    </citation>
    <scope>STRUCTURE BY NMR OF 330-348 IN COMPLEX WITH SAG</scope>
    <scope>PHOSPHORYLATION AT SER-334; THR-335; THR-336; SER-338; THR-340; THR-342 AND SER-343</scope>
</reference>
<reference evidence="56" key="25">
    <citation type="journal article" date="2004" name="J. Biol. Chem.">
        <title>Conformational changes in the phosphorylated C-terminal domain of rhodopsin during rhodopsin arrestin interactions.</title>
        <authorList>
            <person name="Kisselev O.G."/>
            <person name="Downs M.A."/>
            <person name="McDowell J.H."/>
            <person name="Hargrave P.A."/>
        </authorList>
    </citation>
    <scope>STRUCTURE BY NMR OF 330-348 IN COMPLEX WITH SAG</scope>
    <scope>PHOSPHORYLATION AT SER-334; THR-335; THR-336; SER-338; THR-340; THR-342 AND SER-343</scope>
</reference>
<reference evidence="57" key="26">
    <citation type="journal article" date="2004" name="J. Mol. Biol.">
        <title>The retinal conformation and its environment in rhodopsin in light of a new 2.2 A crystal structure.</title>
        <authorList>
            <person name="Okada T."/>
            <person name="Sugihara M."/>
            <person name="Bondar A.N."/>
            <person name="Elstner M."/>
            <person name="Entel P."/>
            <person name="Buss V."/>
        </authorList>
    </citation>
    <scope>X-RAY CRYSTALLOGRAPHY (2.2 ANGSTROMS) IN COMPLEX WITH ZINC AND ALL-TRANS-RETINAL</scope>
    <scope>TOPOLOGY</scope>
    <scope>PALMITOYLATION AT CYS-322 AND CYS-323</scope>
    <scope>GLYCOSYLATION AT ASN-2 AND ASN-15</scope>
    <scope>DISULFIDE BOND</scope>
</reference>
<reference key="27">
    <citation type="journal article" date="2004" name="J. Mol. Biol.">
        <title>Structure of bovine rhodopsin in a trigonal crystal form.</title>
        <authorList>
            <person name="Li J."/>
            <person name="Edwards P.C."/>
            <person name="Burghammer M."/>
            <person name="Villa C."/>
            <person name="Schertler G.F."/>
        </authorList>
    </citation>
    <scope>X-RAY CRYSTALLOGRAPHY (2.65 ANGSTROMS) IN COMPLEX WITH ALL-TRANS-RETINAL</scope>
    <scope>TOPOLOGY</scope>
    <scope>GLYCOSYLATION AT ASN-2 AND ASN-15</scope>
    <scope>DISULFIDE BONDS</scope>
</reference>
<reference key="28">
    <citation type="journal article" date="1995" name="Biochemistry">
        <title>Structure of the third cytoplasmic loop of bovine rhodopsin.</title>
        <authorList>
            <person name="Yeagle P.L."/>
            <person name="Alderfer J.L."/>
            <person name="Albert A.D."/>
        </authorList>
    </citation>
    <scope>STRUCTURE BY NMR OF 231-252</scope>
</reference>
<reference key="29">
    <citation type="journal article" date="2000" name="J. Pept. Res.">
        <title>Structures of the intradiskal loops and amino terminus of the G-protein receptor, rhodopsin.</title>
        <authorList>
            <person name="Yeagle P.L."/>
            <person name="Salloum A."/>
            <person name="Chopra A."/>
            <person name="Bhawsar N."/>
            <person name="Ali L."/>
            <person name="Kuzmanovski G."/>
            <person name="Alderfer J.L."/>
            <person name="Albert A.D."/>
        </authorList>
    </citation>
    <scope>STRUCTURE BY NMR OF 1-40; 93-123; 172-205 AND 268-293</scope>
</reference>
<reference key="30">
    <citation type="journal article" date="2000" name="Mol. Vis.">
        <title>Three dimensional structure of the seventh transmembrane helical domain of the G-protein receptor, rhodopsin.</title>
        <authorList>
            <person name="Yeagle P.L."/>
            <person name="Danis C."/>
            <person name="Choi G."/>
            <person name="Alderfer J.L."/>
            <person name="Albert A.D."/>
        </authorList>
    </citation>
    <scope>STRUCTURE BY NMR OF 291-315</scope>
</reference>
<reference key="31">
    <citation type="journal article" date="2006" name="Angew. Chem. Int. Ed.">
        <title>Crystallographic analysis of primary visual photochemistry.</title>
        <authorList>
            <person name="Nakamichi H."/>
            <person name="Okada T."/>
        </authorList>
    </citation>
    <scope>X-RAY CRYSTALLOGRAPHY (2.60 ANGSTROMS) IN COMPLEX WITH RETINAL CHROMOPHORE</scope>
    <scope>FUNCTION</scope>
    <scope>TOPOLOGY</scope>
</reference>
<reference evidence="59" key="32">
    <citation type="journal article" date="2006" name="Proc. Natl. Acad. Sci. U.S.A.">
        <title>Local peptide movement in the photoreaction intermediate of rhodopsin.</title>
        <authorList>
            <person name="Nakamichi H."/>
            <person name="Okada T."/>
        </authorList>
    </citation>
    <scope>X-RAY CRYSTALLOGRAPHY (2.80 ANGSTROMS) OF INACTIVATED AND ACTIVATED FORMS IN COMPLEX WITH RETINAL CHROMOPHORE</scope>
    <scope>FUNCTION</scope>
    <scope>TOPOLOGY</scope>
    <scope>PALMITOYLATION AT CYS-322 AND CYS-323</scope>
    <scope>GLYCOSYLATION AT ASN-2 AND ASN-15</scope>
    <scope>DISULFIDE BONDS</scope>
</reference>
<reference key="33">
    <citation type="journal article" date="2006" name="Proc. Natl. Acad. Sci. U.S.A.">
        <title>Crystal structure of a photoactivated deprotonated intermediate of rhodopsin.</title>
        <authorList>
            <person name="Salom D."/>
            <person name="Lodowski D.T."/>
            <person name="Stenkamp R.E."/>
            <person name="Le Trong I."/>
            <person name="Golczak M."/>
            <person name="Jastrzebska B."/>
            <person name="Harris T."/>
            <person name="Ballesteros J.A."/>
            <person name="Palczewski K."/>
        </authorList>
    </citation>
    <scope>X-RAY CRYSTALLOGRAPHY (3.80 ANGSTROMS) INACTIVATED AND ACTIVATED FORMS</scope>
    <scope>FUNCTION</scope>
    <scope>TOPOLOGY</scope>
</reference>
<reference key="34">
    <citation type="journal article" date="2007" name="Biophys. J.">
        <title>Photoisomerization mechanism of rhodopsin and 9-cis-rhodopsin revealed by x-ray crystallography.</title>
        <authorList>
            <person name="Nakamichi H."/>
            <person name="Buss V."/>
            <person name="Okada T."/>
        </authorList>
    </citation>
    <scope>X-RAY CRYSTALLOGRAPHY (2.95 ANGSTROMS) INACTIVATED AND ACTIVATED FORMS IN COMPLEX WITH RETINAL CHROMOPHORE</scope>
    <scope>FUNCTION</scope>
    <scope>TOPOLOGY</scope>
</reference>
<reference key="35">
    <citation type="journal article" date="2007" name="J. Mol. Biol.">
        <title>Crystal structure of a thermally stable rhodopsin mutant.</title>
        <authorList>
            <person name="Standfuss J."/>
            <person name="Xie G."/>
            <person name="Edwards P.C."/>
            <person name="Burghammer M."/>
            <person name="Oprian D.D."/>
            <person name="Schertler G.F."/>
        </authorList>
    </citation>
    <scope>X-RAY CRYSTALLOGRAPHY (3.40 ANGSTROMS) OF 3-348</scope>
    <scope>TOPOLOGY</scope>
    <scope>MUTAGENESIS OF ASN-2; ASN-15 AND ASP-282</scope>
</reference>
<reference key="36">
    <citation type="journal article" date="2008" name="Acta Crystallogr. D">
        <title>Alternative models for two crystal structures of bovine rhodopsin.</title>
        <authorList>
            <person name="Stenkamp R.E."/>
        </authorList>
    </citation>
    <scope>X-RAY CRYSTALLOGRAPHY (2.65 ANGSTROMS)</scope>
    <scope>TOPOLOGY</scope>
</reference>
<reference key="37">
    <citation type="journal article" date="2008" name="Nature">
        <title>Crystal structure of the ligand-free G-protein-coupled receptor opsin.</title>
        <authorList>
            <person name="Park J.H."/>
            <person name="Scheerer P."/>
            <person name="Hofmann K.P."/>
            <person name="Choe H.-W."/>
            <person name="Ernst O.P."/>
        </authorList>
    </citation>
    <scope>X-RAY CRYSTALLOGRAPHY (2.90 ANGSTROMS)</scope>
    <scope>DIMERIZATION</scope>
    <scope>SUBUNIT</scope>
    <scope>TOPOLOGY</scope>
</reference>
<reference evidence="69" key="38">
    <citation type="journal article" date="2008" name="Nature">
        <title>Crystal structure of opsin in its G-protein-interacting conformation.</title>
        <authorList>
            <person name="Scheerer P."/>
            <person name="Park J.H."/>
            <person name="Hildebrand P.W."/>
            <person name="Kim Y.J."/>
            <person name="Krauss N."/>
            <person name="Choe H.-W."/>
            <person name="Hofmann K.P."/>
            <person name="Ernst O.P."/>
        </authorList>
    </citation>
    <scope>X-RAY CRYSTALLOGRAPHY (3.20 ANGSTROMS) IN COMPLEX WITH GNAT1</scope>
    <scope>FUNCTION</scope>
    <scope>ACTIVATION MECHANISM</scope>
    <scope>TOPOLOGY</scope>
    <scope>GLYCOSYLATION AT ASN-2 AND ASN-15</scope>
    <scope>PALMITOYLATION AT CYS-322 AND CYS-323</scope>
    <scope>DISULFIDE BONDS</scope>
</reference>
<reference evidence="65" key="39">
    <citation type="journal article" date="2011" name="Nature">
        <title>The structural basis of agonist-induced activation in constitutively active rhodopsin.</title>
        <authorList>
            <person name="Standfuss J."/>
            <person name="Edwards P.C."/>
            <person name="D'Antona A."/>
            <person name="Fransen M."/>
            <person name="Xie G."/>
            <person name="Oprian D.D."/>
            <person name="Schertler G.F."/>
        </authorList>
    </citation>
    <scope>X-RAY CRYSTALLOGRAPHY (3.00 ANGSTROMS) OF MUTANT GLN-113 IN COMPLEX WITH GNAT1</scope>
    <scope>FUNCTION</scope>
    <scope>GLYCOSYLATION AT ASN-15</scope>
    <scope>DISULFIDE BONDS</scope>
    <scope>MUTAGENESIS OF GLU-113</scope>
</reference>
<reference evidence="73" key="40">
    <citation type="journal article" date="2012" name="Proc. Natl. Acad. Sci. U.S.A.">
        <title>Stabilized G protein binding site in the structure of constitutively active metarhodopsin-II.</title>
        <authorList>
            <person name="Deupi X."/>
            <person name="Edwards P."/>
            <person name="Singhal A."/>
            <person name="Nickle B."/>
            <person name="Oprian D."/>
            <person name="Schertler G."/>
            <person name="Standfuss J."/>
        </authorList>
    </citation>
    <scope>X-RAY CRYSTALLOGRAPHY (3.30 ANGSTROMS) OF MUTANT TYR-257 IN COMPLEX WITH ALL-TRANS-RETINAL AND GNAT3</scope>
    <scope>FUNCTION</scope>
    <scope>PALMITOYLATION AT CYS-323</scope>
    <scope>GLYCOSYLATION AT ASN-15</scope>
    <scope>DISULFIDE BOND</scope>
    <scope>MUTAGENESIS OF MET-257</scope>
</reference>
<reference evidence="74 75" key="41">
    <citation type="journal article" date="2013" name="EMBO Rep.">
        <title>Insights into congenital stationary night blindness based on the structure of G90D rhodopsin.</title>
        <authorList>
            <person name="Singhal A."/>
            <person name="Ostermaier M.K."/>
            <person name="Vishnivetskiy S.A."/>
            <person name="Panneels V."/>
            <person name="Homan K.T."/>
            <person name="Tesmer J.J."/>
            <person name="Veprintsev D."/>
            <person name="Deupi X."/>
            <person name="Gurevich V.V."/>
            <person name="Schertler G.F."/>
            <person name="Standfuss J."/>
        </authorList>
    </citation>
    <scope>X-RAY CRYSTALLOGRAPHY (2.90 ANGSTROMS) OF MUTANT ASP-90 IN COMPLEX WITH GNAT1</scope>
    <scope>INTERACTION WITH GNAT1 AND SAG</scope>
    <scope>TOPOLOGY</scope>
    <scope>GLYCOSYLATION AT ASN-15</scope>
    <scope>PALMITOYLATION AT CYS-323</scope>
    <scope>DISULFIDE BONDS</scope>
    <scope>BIOPHYSICOCHEMICAL PROPERTIES</scope>
    <scope>MUTAGENESIS OF GLY-90</scope>
</reference>
<reference evidence="77" key="42">
    <citation type="journal article" date="2014" name="Nat. Commun.">
        <title>Crystal structure of a common GPCR-binding interface for G protein and arrestin.</title>
        <authorList>
            <person name="Szczepek M."/>
            <person name="Beyriere F."/>
            <person name="Hofmann K.P."/>
            <person name="Elgeti M."/>
            <person name="Kazmin R."/>
            <person name="Rose A."/>
            <person name="Bartl F.J."/>
            <person name="von Stetten D."/>
            <person name="Heck M."/>
            <person name="Sommer M.E."/>
            <person name="Hildebrand P.W."/>
            <person name="Scheerer P."/>
        </authorList>
    </citation>
    <scope>X-RAY CRYSTALLOGRAPHY (2.75 ANGSTROMS) IN COMPLEX WITH SAG PEPTIDE</scope>
    <scope>FUNCTION</scope>
    <scope>INTERACTION WITH SAG AND GNAT1</scope>
    <scope>TOPOLOGY</scope>
    <scope>GLYCOSYLATION AT ASN-15</scope>
    <scope>DISULFIDE BONDS</scope>
</reference>
<reference evidence="78" key="43">
    <citation type="journal article" date="2015" name="Structure">
        <title>The High-Resolution Structure of Activated Opsin Reveals a Conserved Solvent Network in the Transmembrane Region Essential for Activation.</title>
        <authorList>
            <person name="Blankenship E."/>
            <person name="Vahedi-Faridi A."/>
            <person name="Lodowski D.T."/>
        </authorList>
    </citation>
    <scope>X-RAY CRYSTALLOGRAPHY (2.29 ANGSTROMS) IN COMPLEX WITH GNAT1 PEPTIDE</scope>
    <scope>TOPOLOGY</scope>
    <scope>GLYCOSYLATION AT ASN-2 AND ASN-15</scope>
    <scope>PALMITOYLATION AT CYS-322 AND CYS-323</scope>
    <scope>DISULFIDE BOND</scope>
</reference>
<reference evidence="79 80" key="44">
    <citation type="journal article" date="2016" name="EMBO Rep.">
        <title>Structural role of the T94I rhodopsin mutation in congenital stationary night blindness.</title>
        <authorList>
            <person name="Singhal A."/>
            <person name="Guo Y."/>
            <person name="Matkovic M."/>
            <person name="Schertler G."/>
            <person name="Deupi X."/>
            <person name="Yan E.C."/>
            <person name="Standfuss J."/>
        </authorList>
    </citation>
    <scope>X-RAY CRYSTALLOGRAPHY (2.30 ANGSTROMS) OF MUTANT ILE-94 IN COMPLEX WITH ALL-TRANS-RETINAL AND GNAT3</scope>
    <scope>FUNCTION</scope>
    <scope>TOPOLOGY</scope>
    <scope>GLYCOSYLATION AT ASN-15</scope>
    <scope>PALMITOYLATION AT CYS-322 AND CYS-323</scope>
    <scope>DISULFIDE BONDS</scope>
    <scope>MUTAGENESIS OF THR-94</scope>
</reference>
<accession>P02699</accession>
<sequence length="348" mass="39008">MNGTEGPNFYVPFSNKTGVVRSPFEAPQYYLAEPWQFSMLAAYMFLLIMLGFPINFLTLYVTVQHKKLRTPLNYILLNLAVADLFMVFGGFTTTLYTSLHGYFVFGPTGCNLEGFFATLGGEIALWSLVVLAIERYVVVCKPMSNFRFGENHAIMGVAFTWVMALACAAPPLVGWSRYIPEGMQCSCGIDYYTPHEETNNESFVIYMFVVHFIIPLIVIFFCYGQLVFTVKEAAAQQQESATTQKAEKEVTRMVIIMVIAFLICWLPYAGVAFYIFTHQGSDFGPIFMTIPAFFAKTSAVYNPVIYIMMNKQFRNCMVTTLCCGKNPLGDDEASTTVSKTETSQVAPA</sequence>
<feature type="chain" id="PRO_0000197653" description="Rhodopsin">
    <location>
        <begin position="1"/>
        <end position="348"/>
    </location>
</feature>
<feature type="topological domain" description="Extracellular" evidence="3 4 5 6 10 12 13 14 16 17 18 19 20 21 22 24 26 27 30 31">
    <location>
        <begin position="1"/>
        <end position="36"/>
    </location>
</feature>
<feature type="transmembrane region" description="Helical; Name=1" evidence="3 4 5 6 10 12 13 14 16 17 18 19 20 21 22 24 26 27 30 31">
    <location>
        <begin position="37"/>
        <end position="61"/>
    </location>
</feature>
<feature type="topological domain" description="Cytoplasmic" evidence="3 4 5 6 10 12 13 14 16 17 18 19 20 21 22 24 26 27 30 31">
    <location>
        <begin position="62"/>
        <end position="73"/>
    </location>
</feature>
<feature type="transmembrane region" description="Helical; Name=2" evidence="3 4 5 6 10 12 13 14 16 17 18 19 20 21 22 24 26 27 30 31">
    <location>
        <begin position="74"/>
        <end position="96"/>
    </location>
</feature>
<feature type="topological domain" description="Extracellular" evidence="3 4 5 6 10 12 13 14 16 17 18 19 20 21 22 24 26 27 30 31">
    <location>
        <begin position="97"/>
        <end position="110"/>
    </location>
</feature>
<feature type="transmembrane region" description="Helical; Name=3" evidence="3 4 5 6 10 12 13 14 16 17 18 19 20 21 22 24 26 27 30 31">
    <location>
        <begin position="111"/>
        <end position="133"/>
    </location>
</feature>
<feature type="topological domain" description="Cytoplasmic" evidence="3 4 5 6 10 12 13 14 16 17 18 19 20 21 22 24 26 27 30 31">
    <location>
        <begin position="134"/>
        <end position="152"/>
    </location>
</feature>
<feature type="transmembrane region" description="Helical; Name=4" evidence="3 4 5 6 10 12 13 14 16 17 18 19 20 21 22 24 26 27 30 31">
    <location>
        <begin position="153"/>
        <end position="173"/>
    </location>
</feature>
<feature type="topological domain" description="Extracellular" evidence="3 4 5 6 10 12 13 14 16 17 18 19 20 21 22 24 26 27 30 31">
    <location>
        <begin position="174"/>
        <end position="202"/>
    </location>
</feature>
<feature type="transmembrane region" description="Helical; Name=5" evidence="3 4 5 6 10 12 13 14 16 17 18 19 20 21 22 24 26 27 30 31">
    <location>
        <begin position="203"/>
        <end position="224"/>
    </location>
</feature>
<feature type="topological domain" description="Cytoplasmic" evidence="3 4 5 6 10 12 13 14 16 17 18 19 20 21 22 24 26 27 30 31">
    <location>
        <begin position="225"/>
        <end position="252"/>
    </location>
</feature>
<feature type="transmembrane region" description="Helical; Name=6" evidence="3 4 5 6 10 12 13 14 16 17 18 19 20 21 22 24 26 27 30 31">
    <location>
        <begin position="253"/>
        <end position="274"/>
    </location>
</feature>
<feature type="topological domain" description="Extracellular" evidence="3 4 5 6 10 12 13 14 16 17 18 19 20 21 22 24 26 27 30 31">
    <location>
        <begin position="275"/>
        <end position="286"/>
    </location>
</feature>
<feature type="transmembrane region" description="Helical; Name=7" evidence="3 4 5 6 10 12 13 14 16 17 18 19 20 21 22 24 26 27 30 31">
    <location>
        <begin position="287"/>
        <end position="308"/>
    </location>
</feature>
<feature type="topological domain" description="Cytoplasmic" evidence="3 4 5 6 10 12 13 14 16 17 18 19 20 21 22 24 26 27 30 31">
    <location>
        <begin position="309"/>
        <end position="348"/>
    </location>
</feature>
<feature type="region of interest" description="Interaction with SAG" evidence="8">
    <location>
        <begin position="330"/>
        <end position="348"/>
    </location>
</feature>
<feature type="short sequence motif" description="'Ionic lock' involved in activated form stabilization" evidence="44 45 47 48">
    <location>
        <begin position="134"/>
        <end position="136"/>
    </location>
</feature>
<feature type="binding site" evidence="3 4 50 52">
    <location>
        <position position="201"/>
    </location>
    <ligand>
        <name>Zn(2+)</name>
        <dbReference type="ChEBI" id="CHEBI:29105"/>
    </ligand>
</feature>
<feature type="binding site" evidence="3 4 50 52">
    <location>
        <position position="279"/>
    </location>
    <ligand>
        <name>Zn(2+)</name>
        <dbReference type="ChEBI" id="CHEBI:29105"/>
    </ligand>
</feature>
<feature type="site" description="Plays an important role in the conformation switch to the active conformation" evidence="22 45 46 48">
    <location>
        <position position="113"/>
    </location>
</feature>
<feature type="modified residue" description="N-acetylmethionine" evidence="49">
    <location>
        <position position="1"/>
    </location>
</feature>
<feature type="modified residue" description="N6-(retinylidene)lysine" evidence="3 4 5 6 10 12 13 14 17 24 25 31 37 49 50 51 52 53 59 66 70 71 72 79">
    <location>
        <position position="296"/>
    </location>
</feature>
<feature type="modified residue" description="Phosphoserine" evidence="8 11">
    <location>
        <position position="334"/>
    </location>
</feature>
<feature type="modified residue" description="Phosphothreonine" evidence="8 11">
    <location>
        <position position="335"/>
    </location>
</feature>
<feature type="modified residue" description="Phosphothreonine" evidence="8 11">
    <location>
        <position position="336"/>
    </location>
</feature>
<feature type="modified residue" description="Phosphoserine" evidence="8 11">
    <location>
        <position position="338"/>
    </location>
</feature>
<feature type="modified residue" description="Phosphothreonine" evidence="8 11">
    <location>
        <position position="340"/>
    </location>
</feature>
<feature type="modified residue" description="Phosphothreonine" evidence="8 11">
    <location>
        <position position="342"/>
    </location>
</feature>
<feature type="modified residue" description="Phosphoserine; by RK and GRK7" evidence="7 8 11">
    <location>
        <position position="343"/>
    </location>
</feature>
<feature type="lipid moiety-binding region" description="S-palmitoyl cysteine" evidence="4 5 9 10 14 21 22 24 30 31 34 52 54 59 78 79">
    <location>
        <position position="322"/>
    </location>
</feature>
<feature type="lipid moiety-binding region" description="S-palmitoyl cysteine" evidence="4 5 9 10 14 21 22 24 26 27 30 31 34 52 54 59 74 77 78 79">
    <location>
        <position position="323"/>
    </location>
</feature>
<feature type="glycosylation site" description="N-linked (GlcNAc...) asparagine" evidence="4 10 12 14 21 30 35 36 50 51 52 57 58 59 60 61 62 64 66 68 69 70 71 72 78">
    <location>
        <position position="2"/>
    </location>
</feature>
<feature type="glycosylation site" description="N-linked (GlcNAc...) asparagine" evidence="4 5 10 12 14 21 22 24 26 27 30 35 36 50 51 52 54 57 58 59 60 61 62 63 64 65 66 67 68 69 70 71 72 73 74 75 76 77 78 79 80 81">
    <location>
        <position position="15"/>
    </location>
</feature>
<feature type="disulfide bond" evidence="2 4 5 6 10 12 14 21 22 23 24 26 30 50 51 52 53 54 55 57 58 59 60 61 62 63 64 65 66 67 68 69 70 71 72 73 74 75 76 77 78 79 80 81 82">
    <location>
        <begin position="110"/>
        <end position="187"/>
    </location>
</feature>
<feature type="mutagenesis site" description="Stabilized by a disulfide bond and normal light absorption; when associated with C-282 and D-15." evidence="18">
    <original>N</original>
    <variation>C</variation>
    <location>
        <position position="2"/>
    </location>
</feature>
<feature type="mutagenesis site" description="Normal light absorption; when associated with C-2 and C-282." evidence="18">
    <original>N</original>
    <variation>D</variation>
    <location>
        <position position="15"/>
    </location>
</feature>
<feature type="mutagenesis site" description="Increased thermal stability and decreased retinal uptake. Decreases stability of the inactive conformation." evidence="26">
    <original>G</original>
    <variation>D</variation>
    <location>
        <position position="90"/>
    </location>
</feature>
<feature type="mutagenesis site" description="Stabilizes the activated conformation and hinders hydrolysis of the covalent bond that retains all-trans-retinol." evidence="31">
    <original>T</original>
    <variation>I</variation>
    <location>
        <position position="94"/>
    </location>
</feature>
<feature type="mutagenesis site" description="Causes shift to the activated conformation." evidence="22">
    <original>E</original>
    <variation>Q</variation>
    <location>
        <position position="113"/>
    </location>
</feature>
<feature type="mutagenesis site" description="Causes shift to the activated conformation." evidence="24">
    <original>M</original>
    <variation>Y</variation>
    <location>
        <position position="257"/>
    </location>
</feature>
<feature type="mutagenesis site" description="Stabilized by a disulfide bond and normal light absorption; when associated with C-2 and D-15." evidence="18">
    <original>D</original>
    <variation>C</variation>
    <location>
        <position position="282"/>
    </location>
</feature>
<feature type="sequence conflict" description="In Ref. 3; AAA30675." evidence="39" ref="3">
    <original>S</original>
    <variation>F</variation>
    <location>
        <position position="281"/>
    </location>
</feature>
<feature type="strand" evidence="93">
    <location>
        <begin position="3"/>
        <end position="6"/>
    </location>
</feature>
<feature type="strand" evidence="93">
    <location>
        <begin position="9"/>
        <end position="13"/>
    </location>
</feature>
<feature type="helix" evidence="91">
    <location>
        <begin position="15"/>
        <end position="17"/>
    </location>
</feature>
<feature type="turn" evidence="93">
    <location>
        <begin position="23"/>
        <end position="25"/>
    </location>
</feature>
<feature type="turn" evidence="93">
    <location>
        <begin position="29"/>
        <end position="31"/>
    </location>
</feature>
<feature type="helix" evidence="93">
    <location>
        <begin position="34"/>
        <end position="64"/>
    </location>
</feature>
<feature type="helix" evidence="92">
    <location>
        <begin position="66"/>
        <end position="68"/>
    </location>
</feature>
<feature type="helix" evidence="93">
    <location>
        <begin position="71"/>
        <end position="89"/>
    </location>
</feature>
<feature type="helix" evidence="93">
    <location>
        <begin position="91"/>
        <end position="100"/>
    </location>
</feature>
<feature type="helix" evidence="83">
    <location>
        <begin position="103"/>
        <end position="105"/>
    </location>
</feature>
<feature type="helix" evidence="93">
    <location>
        <begin position="106"/>
        <end position="140"/>
    </location>
</feature>
<feature type="strand" evidence="89">
    <location>
        <begin position="143"/>
        <end position="145"/>
    </location>
</feature>
<feature type="helix" evidence="93">
    <location>
        <begin position="150"/>
        <end position="168"/>
    </location>
</feature>
<feature type="helix" evidence="93">
    <location>
        <begin position="170"/>
        <end position="172"/>
    </location>
</feature>
<feature type="turn" evidence="84">
    <location>
        <begin position="175"/>
        <end position="177"/>
    </location>
</feature>
<feature type="strand" evidence="93">
    <location>
        <begin position="178"/>
        <end position="181"/>
    </location>
</feature>
<feature type="turn" evidence="93">
    <location>
        <begin position="182"/>
        <end position="185"/>
    </location>
</feature>
<feature type="strand" evidence="93">
    <location>
        <begin position="186"/>
        <end position="189"/>
    </location>
</feature>
<feature type="helix" evidence="84">
    <location>
        <begin position="192"/>
        <end position="195"/>
    </location>
</feature>
<feature type="helix" evidence="93">
    <location>
        <begin position="196"/>
        <end position="198"/>
    </location>
</feature>
<feature type="helix" evidence="93">
    <location>
        <begin position="200"/>
        <end position="210"/>
    </location>
</feature>
<feature type="helix" evidence="93">
    <location>
        <begin position="213"/>
        <end position="227"/>
    </location>
</feature>
<feature type="strand" evidence="86">
    <location>
        <begin position="228"/>
        <end position="230"/>
    </location>
</feature>
<feature type="turn" evidence="90">
    <location>
        <begin position="235"/>
        <end position="238"/>
    </location>
</feature>
<feature type="strand" evidence="89">
    <location>
        <begin position="239"/>
        <end position="241"/>
    </location>
</feature>
<feature type="strand" evidence="87">
    <location>
        <begin position="242"/>
        <end position="245"/>
    </location>
</feature>
<feature type="helix" evidence="93">
    <location>
        <begin position="246"/>
        <end position="277"/>
    </location>
</feature>
<feature type="turn" evidence="89">
    <location>
        <begin position="278"/>
        <end position="280"/>
    </location>
</feature>
<feature type="helix" evidence="93">
    <location>
        <begin position="286"/>
        <end position="294"/>
    </location>
</feature>
<feature type="helix" evidence="93">
    <location>
        <begin position="295"/>
        <end position="299"/>
    </location>
</feature>
<feature type="helix" evidence="93">
    <location>
        <begin position="301"/>
        <end position="309"/>
    </location>
</feature>
<feature type="helix" evidence="93">
    <location>
        <begin position="311"/>
        <end position="321"/>
    </location>
</feature>
<feature type="turn" evidence="92">
    <location>
        <begin position="322"/>
        <end position="324"/>
    </location>
</feature>
<feature type="turn" evidence="89">
    <location>
        <begin position="328"/>
        <end position="330"/>
    </location>
</feature>
<feature type="strand" evidence="88">
    <location>
        <begin position="332"/>
        <end position="334"/>
    </location>
</feature>
<feature type="strand" evidence="85">
    <location>
        <begin position="336"/>
        <end position="338"/>
    </location>
</feature>
<feature type="strand" evidence="89">
    <location>
        <begin position="339"/>
        <end position="342"/>
    </location>
</feature>
<comment type="function">
    <text evidence="1 7 13 14 16 17 21 22 24 26 27 31 40 41 42 43 47">Photoreceptor required for image-forming vision at low light intensity. Required for photoreceptor cell viability after birth (By similarity). Light-induced isomerization of 11-cis to all-trans retinal triggers a conformational change that activates signaling via G-proteins (PubMed:10926528, PubMed:11972040, PubMed:12044163, PubMed:16586416, PubMed:16908857, PubMed:17060607, PubMed:17449675, PubMed:18818650, PubMed:21389983, PubMed:22198838, PubMed:23579341, PubMed:25205354, PubMed:27458239). Subsequent receptor phosphorylation mediates displacement of the bound G-protein alpha subunit by the arrestin SAG and terminates signaling (PubMed:1396673, PubMed:15111114).</text>
</comment>
<comment type="subunit">
    <text evidence="1 4 8 11 13 15 17 19 21 22 24 25 26 27 28 29 30 31 32 33">Homodimer (PubMed:18563085, PubMed:23303210). May form a complex composed of RHO, GRK1 and RCVRN in a Ca(2+)-dependent manner; RCVRN prevents the interaction between GRK1 and RHO (PubMed:17020884). Interacts with GRK1 (By similarity). Interacts (phosphorylated form) with SAG (PubMed:15111114, PubMed:15351781, PubMed:23579341, PubMed:25205354, PubMed:26200343). Interacts with GNAT1 (PubMed:18818650, PubMed:21389983, PubMed:23303210, PubMed:23579341, PubMed:26526852, PubMed:28655769). Interacts with GNAT3 (PubMed:22198838, PubMed:27458239). SAG and G-proteins compete for a common binding site (By similarity). Interacts with PRCD; the interaction promotes PRCD stability (PubMed:27509380). Forms a complex with ASAP1 and ARF4 (PubMed:25673879). Forms a complex with ASAP1, RAB11A, Rabin8/RAB3IP, ARF4 and RAB11FIP3; the complex regulates Golgi-to-cilia rhodopsin/RHO transport in photoreceptors (PubMed:25673879).</text>
</comment>
<comment type="interaction">
    <interactant intactId="EBI-8592832">
        <id>P02699</id>
    </interactant>
    <interactant intactId="EBI-7052221">
        <id>P04695</id>
        <label>GNAT1</label>
    </interactant>
    <organismsDiffer>false</organismsDiffer>
    <experiments>3</experiments>
</comment>
<comment type="interaction">
    <interactant intactId="EBI-8592832">
        <id>P02699</id>
    </interactant>
    <interactant intactId="EBI-8592832">
        <id>P02699</id>
        <label>RHO</label>
    </interactant>
    <organismsDiffer>false</organismsDiffer>
    <experiments>6</experiments>
</comment>
<comment type="interaction">
    <interactant intactId="EBI-8592832">
        <id>P02699</id>
    </interactant>
    <interactant intactId="EBI-15575296">
        <id>P08168-1</id>
        <label>SAG</label>
    </interactant>
    <organismsDiffer>false</organismsDiffer>
    <experiments>23</experiments>
</comment>
<comment type="subcellular location">
    <subcellularLocation>
        <location evidence="3 24 25 32 34 38">Membrane</location>
        <topology evidence="3 4 5 10 12 13 14 16 17 18 19 20 21 22 24 26 27 30 31">Multi-pass membrane protein</topology>
    </subcellularLocation>
    <subcellularLocation>
        <location evidence="32 33 34 38">Cell projection</location>
        <location evidence="32 33 34 38">Cilium</location>
        <location evidence="32 33 34 38">Photoreceptor outer segment</location>
    </subcellularLocation>
    <text evidence="1">Synthesized in the inner segment (IS) of rod photoreceptor cells before vectorial transport to disk membranes in the rod outer segment (OS) photosensory cilia.</text>
</comment>
<comment type="tissue specificity">
    <text evidence="25 33 34 38">Expressed in rod-shaped photoreceptor cells in the retina that mediate vision in dim light (at protein level).</text>
</comment>
<comment type="PTM">
    <text evidence="7 8 11">Phosphorylated on some or all of the serine and threonine residues present in the C-terminal region.</text>
</comment>
<comment type="PTM">
    <text evidence="3 4 5 6 10 12 13 14 17 22 24 25 31 37 49">Contains one covalently linked retinal chromophore. Upon light absorption, the covalently bound 11-cis-retinal is converted to all-trans-retinal. After hydrolysis of the Schiff base and release of the covalently bound all-trans-retinal, active rhodopsin is regenerated by binding of a fresh molecule of 11-cis-retinal.</text>
</comment>
<comment type="similarity">
    <text evidence="2">Belongs to the G-protein coupled receptor 1 family. Opsin subfamily.</text>
</comment>
<protein>
    <recommendedName>
        <fullName>Rhodopsin</fullName>
    </recommendedName>
</protein>